<gene>
    <name evidence="1" type="primary">pyrB</name>
    <name type="ordered locus">YPDSF_0309</name>
</gene>
<proteinExistence type="inferred from homology"/>
<sequence length="311" mass="34559">MANPLYHKHIISINDLSRDELELVLRTAASLKKTPQPELLKHKVIASCFFEASTRTRLSFETSIHRLGASVVGFSDSSNTSLGKKGETLADTMSVISTYVDAIVMRHPQEGASRLAAQFSGNVPIVNAGDGANQHPTQTLLDLFTIQETQGRLDNINIAMVGDLKYGRTVHSLTQALAKFNGNHFFFIAPDALAMPAYILQMLEEKEIEYSLHESLEEVVPELDILYMTRVQKERLDPSEYANVKAQFILRSSDLTGARDNLKVLHPLPRIDEITTDVDKTPYAYYFQQAGNGIFARQALLALVLNAELAL</sequence>
<name>PYRB_YERPP</name>
<keyword id="KW-0665">Pyrimidine biosynthesis</keyword>
<keyword id="KW-0808">Transferase</keyword>
<organism>
    <name type="scientific">Yersinia pestis (strain Pestoides F)</name>
    <dbReference type="NCBI Taxonomy" id="386656"/>
    <lineage>
        <taxon>Bacteria</taxon>
        <taxon>Pseudomonadati</taxon>
        <taxon>Pseudomonadota</taxon>
        <taxon>Gammaproteobacteria</taxon>
        <taxon>Enterobacterales</taxon>
        <taxon>Yersiniaceae</taxon>
        <taxon>Yersinia</taxon>
    </lineage>
</organism>
<reference key="1">
    <citation type="submission" date="2007-02" db="EMBL/GenBank/DDBJ databases">
        <title>Complete sequence of chromosome of Yersinia pestis Pestoides F.</title>
        <authorList>
            <consortium name="US DOE Joint Genome Institute"/>
            <person name="Copeland A."/>
            <person name="Lucas S."/>
            <person name="Lapidus A."/>
            <person name="Barry K."/>
            <person name="Detter J.C."/>
            <person name="Glavina del Rio T."/>
            <person name="Hammon N."/>
            <person name="Israni S."/>
            <person name="Dalin E."/>
            <person name="Tice H."/>
            <person name="Pitluck S."/>
            <person name="Di Bartolo G."/>
            <person name="Chain P."/>
            <person name="Malfatti S."/>
            <person name="Shin M."/>
            <person name="Vergez L."/>
            <person name="Schmutz J."/>
            <person name="Larimer F."/>
            <person name="Land M."/>
            <person name="Hauser L."/>
            <person name="Worsham P."/>
            <person name="Chu M."/>
            <person name="Bearden S."/>
            <person name="Garcia E."/>
            <person name="Richardson P."/>
        </authorList>
    </citation>
    <scope>NUCLEOTIDE SEQUENCE [LARGE SCALE GENOMIC DNA]</scope>
    <source>
        <strain>Pestoides F</strain>
    </source>
</reference>
<dbReference type="EC" id="2.1.3.2" evidence="1"/>
<dbReference type="EMBL" id="CP000668">
    <property type="protein sequence ID" value="ABP38728.1"/>
    <property type="molecule type" value="Genomic_DNA"/>
</dbReference>
<dbReference type="RefSeq" id="WP_002210111.1">
    <property type="nucleotide sequence ID" value="NZ_CP009715.1"/>
</dbReference>
<dbReference type="SMR" id="A4THG6"/>
<dbReference type="GeneID" id="57975128"/>
<dbReference type="KEGG" id="ypp:YPDSF_0309"/>
<dbReference type="PATRIC" id="fig|386656.14.peg.1610"/>
<dbReference type="UniPathway" id="UPA00070">
    <property type="reaction ID" value="UER00116"/>
</dbReference>
<dbReference type="GO" id="GO:0005829">
    <property type="term" value="C:cytosol"/>
    <property type="evidence" value="ECO:0007669"/>
    <property type="project" value="TreeGrafter"/>
</dbReference>
<dbReference type="GO" id="GO:0016597">
    <property type="term" value="F:amino acid binding"/>
    <property type="evidence" value="ECO:0007669"/>
    <property type="project" value="InterPro"/>
</dbReference>
<dbReference type="GO" id="GO:0004070">
    <property type="term" value="F:aspartate carbamoyltransferase activity"/>
    <property type="evidence" value="ECO:0007669"/>
    <property type="project" value="UniProtKB-UniRule"/>
</dbReference>
<dbReference type="GO" id="GO:0006207">
    <property type="term" value="P:'de novo' pyrimidine nucleobase biosynthetic process"/>
    <property type="evidence" value="ECO:0007669"/>
    <property type="project" value="InterPro"/>
</dbReference>
<dbReference type="GO" id="GO:0044205">
    <property type="term" value="P:'de novo' UMP biosynthetic process"/>
    <property type="evidence" value="ECO:0007669"/>
    <property type="project" value="UniProtKB-UniRule"/>
</dbReference>
<dbReference type="GO" id="GO:0006520">
    <property type="term" value="P:amino acid metabolic process"/>
    <property type="evidence" value="ECO:0007669"/>
    <property type="project" value="InterPro"/>
</dbReference>
<dbReference type="FunFam" id="3.40.50.1370:FF:000001">
    <property type="entry name" value="Aspartate carbamoyltransferase"/>
    <property type="match status" value="1"/>
</dbReference>
<dbReference type="FunFam" id="3.40.50.1370:FF:000002">
    <property type="entry name" value="Aspartate carbamoyltransferase 2"/>
    <property type="match status" value="1"/>
</dbReference>
<dbReference type="Gene3D" id="3.40.50.1370">
    <property type="entry name" value="Aspartate/ornithine carbamoyltransferase"/>
    <property type="match status" value="2"/>
</dbReference>
<dbReference type="HAMAP" id="MF_00001">
    <property type="entry name" value="Asp_carb_tr"/>
    <property type="match status" value="1"/>
</dbReference>
<dbReference type="InterPro" id="IPR006132">
    <property type="entry name" value="Asp/Orn_carbamoyltranf_P-bd"/>
</dbReference>
<dbReference type="InterPro" id="IPR006130">
    <property type="entry name" value="Asp/Orn_carbamoylTrfase"/>
</dbReference>
<dbReference type="InterPro" id="IPR036901">
    <property type="entry name" value="Asp/Orn_carbamoylTrfase_sf"/>
</dbReference>
<dbReference type="InterPro" id="IPR002082">
    <property type="entry name" value="Asp_carbamoyltransf"/>
</dbReference>
<dbReference type="InterPro" id="IPR006131">
    <property type="entry name" value="Asp_carbamoyltransf_Asp/Orn-bd"/>
</dbReference>
<dbReference type="NCBIfam" id="TIGR00670">
    <property type="entry name" value="asp_carb_tr"/>
    <property type="match status" value="1"/>
</dbReference>
<dbReference type="NCBIfam" id="NF002032">
    <property type="entry name" value="PRK00856.1"/>
    <property type="match status" value="1"/>
</dbReference>
<dbReference type="PANTHER" id="PTHR45753:SF6">
    <property type="entry name" value="ASPARTATE CARBAMOYLTRANSFERASE"/>
    <property type="match status" value="1"/>
</dbReference>
<dbReference type="PANTHER" id="PTHR45753">
    <property type="entry name" value="ORNITHINE CARBAMOYLTRANSFERASE, MITOCHONDRIAL"/>
    <property type="match status" value="1"/>
</dbReference>
<dbReference type="Pfam" id="PF00185">
    <property type="entry name" value="OTCace"/>
    <property type="match status" value="1"/>
</dbReference>
<dbReference type="Pfam" id="PF02729">
    <property type="entry name" value="OTCace_N"/>
    <property type="match status" value="1"/>
</dbReference>
<dbReference type="PRINTS" id="PR00100">
    <property type="entry name" value="AOTCASE"/>
</dbReference>
<dbReference type="PRINTS" id="PR00101">
    <property type="entry name" value="ATCASE"/>
</dbReference>
<dbReference type="SUPFAM" id="SSF53671">
    <property type="entry name" value="Aspartate/ornithine carbamoyltransferase"/>
    <property type="match status" value="1"/>
</dbReference>
<dbReference type="PROSITE" id="PS00097">
    <property type="entry name" value="CARBAMOYLTRANSFERASE"/>
    <property type="match status" value="1"/>
</dbReference>
<protein>
    <recommendedName>
        <fullName evidence="1">Aspartate carbamoyltransferase catalytic subunit</fullName>
        <ecNumber evidence="1">2.1.3.2</ecNumber>
    </recommendedName>
    <alternativeName>
        <fullName evidence="1">Aspartate transcarbamylase</fullName>
        <shortName evidence="1">ATCase</shortName>
    </alternativeName>
</protein>
<evidence type="ECO:0000255" key="1">
    <source>
        <dbReference type="HAMAP-Rule" id="MF_00001"/>
    </source>
</evidence>
<feature type="chain" id="PRO_0000301644" description="Aspartate carbamoyltransferase catalytic subunit">
    <location>
        <begin position="1"/>
        <end position="311"/>
    </location>
</feature>
<feature type="binding site" evidence="1">
    <location>
        <position position="55"/>
    </location>
    <ligand>
        <name>carbamoyl phosphate</name>
        <dbReference type="ChEBI" id="CHEBI:58228"/>
    </ligand>
</feature>
<feature type="binding site" evidence="1">
    <location>
        <position position="56"/>
    </location>
    <ligand>
        <name>carbamoyl phosphate</name>
        <dbReference type="ChEBI" id="CHEBI:58228"/>
    </ligand>
</feature>
<feature type="binding site" evidence="1">
    <location>
        <position position="85"/>
    </location>
    <ligand>
        <name>L-aspartate</name>
        <dbReference type="ChEBI" id="CHEBI:29991"/>
    </ligand>
</feature>
<feature type="binding site" evidence="1">
    <location>
        <position position="106"/>
    </location>
    <ligand>
        <name>carbamoyl phosphate</name>
        <dbReference type="ChEBI" id="CHEBI:58228"/>
    </ligand>
</feature>
<feature type="binding site" evidence="1">
    <location>
        <position position="135"/>
    </location>
    <ligand>
        <name>carbamoyl phosphate</name>
        <dbReference type="ChEBI" id="CHEBI:58228"/>
    </ligand>
</feature>
<feature type="binding site" evidence="1">
    <location>
        <position position="138"/>
    </location>
    <ligand>
        <name>carbamoyl phosphate</name>
        <dbReference type="ChEBI" id="CHEBI:58228"/>
    </ligand>
</feature>
<feature type="binding site" evidence="1">
    <location>
        <position position="168"/>
    </location>
    <ligand>
        <name>L-aspartate</name>
        <dbReference type="ChEBI" id="CHEBI:29991"/>
    </ligand>
</feature>
<feature type="binding site" evidence="1">
    <location>
        <position position="230"/>
    </location>
    <ligand>
        <name>L-aspartate</name>
        <dbReference type="ChEBI" id="CHEBI:29991"/>
    </ligand>
</feature>
<feature type="binding site" evidence="1">
    <location>
        <position position="268"/>
    </location>
    <ligand>
        <name>carbamoyl phosphate</name>
        <dbReference type="ChEBI" id="CHEBI:58228"/>
    </ligand>
</feature>
<feature type="binding site" evidence="1">
    <location>
        <position position="269"/>
    </location>
    <ligand>
        <name>carbamoyl phosphate</name>
        <dbReference type="ChEBI" id="CHEBI:58228"/>
    </ligand>
</feature>
<accession>A4THG6</accession>
<comment type="function">
    <text evidence="1">Catalyzes the condensation of carbamoyl phosphate and aspartate to form carbamoyl aspartate and inorganic phosphate, the committed step in the de novo pyrimidine nucleotide biosynthesis pathway.</text>
</comment>
<comment type="catalytic activity">
    <reaction evidence="1">
        <text>carbamoyl phosphate + L-aspartate = N-carbamoyl-L-aspartate + phosphate + H(+)</text>
        <dbReference type="Rhea" id="RHEA:20013"/>
        <dbReference type="ChEBI" id="CHEBI:15378"/>
        <dbReference type="ChEBI" id="CHEBI:29991"/>
        <dbReference type="ChEBI" id="CHEBI:32814"/>
        <dbReference type="ChEBI" id="CHEBI:43474"/>
        <dbReference type="ChEBI" id="CHEBI:58228"/>
        <dbReference type="EC" id="2.1.3.2"/>
    </reaction>
</comment>
<comment type="pathway">
    <text evidence="1">Pyrimidine metabolism; UMP biosynthesis via de novo pathway; (S)-dihydroorotate from bicarbonate: step 2/3.</text>
</comment>
<comment type="subunit">
    <text evidence="1">Heterododecamer (2C3:3R2) of six catalytic PyrB chains organized as two trimers (C3), and six regulatory PyrI chains organized as three dimers (R2).</text>
</comment>
<comment type="similarity">
    <text evidence="1">Belongs to the aspartate/ornithine carbamoyltransferase superfamily. ATCase family.</text>
</comment>